<accession>P00012</accession>
<name>CYC_MIRLE</name>
<evidence type="ECO:0000250" key="1"/>
<evidence type="ECO:0000250" key="2">
    <source>
        <dbReference type="UniProtKB" id="P62894"/>
    </source>
</evidence>
<evidence type="ECO:0000250" key="3">
    <source>
        <dbReference type="UniProtKB" id="P62897"/>
    </source>
</evidence>
<evidence type="ECO:0000255" key="4">
    <source>
        <dbReference type="PROSITE-ProRule" id="PRU00433"/>
    </source>
</evidence>
<evidence type="ECO:0000269" key="5">
    <source>
    </source>
</evidence>
<evidence type="ECO:0000305" key="6"/>
<organism>
    <name type="scientific">Mirounga leonina</name>
    <name type="common">Southern elephant seal</name>
    <name type="synonym">Phoca leonina</name>
    <dbReference type="NCBI Taxonomy" id="9715"/>
    <lineage>
        <taxon>Eukaryota</taxon>
        <taxon>Metazoa</taxon>
        <taxon>Chordata</taxon>
        <taxon>Craniata</taxon>
        <taxon>Vertebrata</taxon>
        <taxon>Euteleostomi</taxon>
        <taxon>Mammalia</taxon>
        <taxon>Eutheria</taxon>
        <taxon>Laurasiatheria</taxon>
        <taxon>Carnivora</taxon>
        <taxon>Caniformia</taxon>
        <taxon>Pinnipedia</taxon>
        <taxon>Phocidae</taxon>
        <taxon>Monachinae</taxon>
        <taxon>Miroungini</taxon>
        <taxon>Mirounga</taxon>
    </lineage>
</organism>
<proteinExistence type="evidence at protein level"/>
<reference key="1">
    <citation type="journal article" date="1972" name="Biochim. Biophys. Acta">
        <title>Primary structure of cytochrome c from the elephant seal, Mirouga leonina.</title>
        <authorList>
            <person name="Augusteyn R.C."/>
            <person name="McDowall M.A."/>
            <person name="Webb E.C."/>
            <person name="Zerner B."/>
        </authorList>
    </citation>
    <scope>PROTEIN SEQUENCE OF 2-105</scope>
    <scope>ACETYLATION AT GLY-2</scope>
</reference>
<keyword id="KW-0007">Acetylation</keyword>
<keyword id="KW-0053">Apoptosis</keyword>
<keyword id="KW-0903">Direct protein sequencing</keyword>
<keyword id="KW-0249">Electron transport</keyword>
<keyword id="KW-0349">Heme</keyword>
<keyword id="KW-0408">Iron</keyword>
<keyword id="KW-0479">Metal-binding</keyword>
<keyword id="KW-0496">Mitochondrion</keyword>
<keyword id="KW-0597">Phosphoprotein</keyword>
<keyword id="KW-0679">Respiratory chain</keyword>
<keyword id="KW-0813">Transport</keyword>
<dbReference type="PIR" id="A04615">
    <property type="entry name" value="CCSLE"/>
</dbReference>
<dbReference type="SMR" id="P00012"/>
<dbReference type="iPTMnet" id="P00012"/>
<dbReference type="GO" id="GO:0005829">
    <property type="term" value="C:cytosol"/>
    <property type="evidence" value="ECO:0000250"/>
    <property type="project" value="UniProtKB"/>
</dbReference>
<dbReference type="GO" id="GO:0005758">
    <property type="term" value="C:mitochondrial intermembrane space"/>
    <property type="evidence" value="ECO:0007669"/>
    <property type="project" value="UniProtKB-SubCell"/>
</dbReference>
<dbReference type="GO" id="GO:0009055">
    <property type="term" value="F:electron transfer activity"/>
    <property type="evidence" value="ECO:0007669"/>
    <property type="project" value="InterPro"/>
</dbReference>
<dbReference type="GO" id="GO:0020037">
    <property type="term" value="F:heme binding"/>
    <property type="evidence" value="ECO:0007669"/>
    <property type="project" value="InterPro"/>
</dbReference>
<dbReference type="GO" id="GO:0046872">
    <property type="term" value="F:metal ion binding"/>
    <property type="evidence" value="ECO:0007669"/>
    <property type="project" value="UniProtKB-KW"/>
</dbReference>
<dbReference type="GO" id="GO:0006915">
    <property type="term" value="P:apoptotic process"/>
    <property type="evidence" value="ECO:0007669"/>
    <property type="project" value="UniProtKB-KW"/>
</dbReference>
<dbReference type="FunFam" id="1.10.760.10:FF:000008">
    <property type="entry name" value="Cytochrome c"/>
    <property type="match status" value="1"/>
</dbReference>
<dbReference type="Gene3D" id="1.10.760.10">
    <property type="entry name" value="Cytochrome c-like domain"/>
    <property type="match status" value="1"/>
</dbReference>
<dbReference type="InterPro" id="IPR009056">
    <property type="entry name" value="Cyt_c-like_dom"/>
</dbReference>
<dbReference type="InterPro" id="IPR036909">
    <property type="entry name" value="Cyt_c-like_dom_sf"/>
</dbReference>
<dbReference type="InterPro" id="IPR002327">
    <property type="entry name" value="Cyt_c_1A/1B"/>
</dbReference>
<dbReference type="PANTHER" id="PTHR11961">
    <property type="entry name" value="CYTOCHROME C"/>
    <property type="match status" value="1"/>
</dbReference>
<dbReference type="Pfam" id="PF00034">
    <property type="entry name" value="Cytochrom_C"/>
    <property type="match status" value="1"/>
</dbReference>
<dbReference type="PRINTS" id="PR00604">
    <property type="entry name" value="CYTCHRMECIAB"/>
</dbReference>
<dbReference type="SUPFAM" id="SSF46626">
    <property type="entry name" value="Cytochrome c"/>
    <property type="match status" value="1"/>
</dbReference>
<dbReference type="PROSITE" id="PS51007">
    <property type="entry name" value="CYTC"/>
    <property type="match status" value="1"/>
</dbReference>
<feature type="initiator methionine" description="Removed" evidence="5">
    <location>
        <position position="1"/>
    </location>
</feature>
<feature type="chain" id="PRO_0000108224" description="Cytochrome c">
    <location>
        <begin position="2"/>
        <end position="105"/>
    </location>
</feature>
<feature type="binding site" description="covalent" evidence="4 5">
    <location>
        <position position="15"/>
    </location>
    <ligand>
        <name>heme c</name>
        <dbReference type="ChEBI" id="CHEBI:61717"/>
    </ligand>
</feature>
<feature type="binding site" description="covalent" evidence="4 5">
    <location>
        <position position="18"/>
    </location>
    <ligand>
        <name>heme c</name>
        <dbReference type="ChEBI" id="CHEBI:61717"/>
    </ligand>
</feature>
<feature type="binding site" description="axial binding residue">
    <location>
        <position position="19"/>
    </location>
    <ligand>
        <name>heme c</name>
        <dbReference type="ChEBI" id="CHEBI:61717"/>
    </ligand>
    <ligandPart>
        <name>Fe</name>
        <dbReference type="ChEBI" id="CHEBI:18248"/>
    </ligandPart>
</feature>
<feature type="binding site" description="axial binding residue">
    <location>
        <position position="81"/>
    </location>
    <ligand>
        <name>heme c</name>
        <dbReference type="ChEBI" id="CHEBI:61717"/>
    </ligand>
    <ligandPart>
        <name>Fe</name>
        <dbReference type="ChEBI" id="CHEBI:18248"/>
    </ligandPart>
</feature>
<feature type="modified residue" description="N-acetylglycine" evidence="5">
    <location>
        <position position="2"/>
    </location>
</feature>
<feature type="modified residue" description="Phosphotyrosine" evidence="2">
    <location>
        <position position="49"/>
    </location>
</feature>
<feature type="modified residue" description="N6-succinyllysine" evidence="3">
    <location>
        <position position="56"/>
    </location>
</feature>
<feature type="modified residue" description="N6-acetyllysine; alternate" evidence="3">
    <location>
        <position position="73"/>
    </location>
</feature>
<feature type="modified residue" description="N6-succinyllysine; alternate" evidence="3">
    <location>
        <position position="73"/>
    </location>
</feature>
<feature type="modified residue" description="Phosphotyrosine" evidence="2">
    <location>
        <position position="98"/>
    </location>
</feature>
<feature type="modified residue" description="N6-acetyllysine" evidence="3">
    <location>
        <position position="100"/>
    </location>
</feature>
<protein>
    <recommendedName>
        <fullName>Cytochrome c</fullName>
    </recommendedName>
</protein>
<gene>
    <name type="primary">CYCS</name>
    <name type="synonym">CYC</name>
</gene>
<sequence>MGDVEKGKKIFVQKCAQCHTVEKGGKHKTGPNLHGLFGRKTGQAPGFSYTDANKNKGITWGEETLMEYLENPKKYIPGTKMIFAGIKKTGERADLIAYLKIATKE</sequence>
<comment type="function">
    <text>Electron carrier protein. The oxidized form of the cytochrome c heme group can accept an electron from the heme group of the cytochrome c1 subunit of cytochrome reductase. Cytochrome c then transfers this electron to the cytochrome oxidase complex, the final protein carrier in the mitochondrial electron-transport chain.</text>
</comment>
<comment type="function">
    <text evidence="1">Plays a role in apoptosis. Suppression of the anti-apoptotic members or activation of the pro-apoptotic members of the Bcl-2 family leads to altered mitochondrial membrane permeability resulting in release of cytochrome c into the cytosol. Binding of cytochrome c to Apaf-1 triggers the activation of caspase-9, which then accelerates apoptosis by activating other caspases (By similarity).</text>
</comment>
<comment type="subcellular location">
    <subcellularLocation>
        <location>Mitochondrion intermembrane space</location>
    </subcellularLocation>
    <text>Loosely associated with the inner membrane.</text>
</comment>
<comment type="PTM">
    <text>Binds 1 heme c group covalently per subunit.</text>
</comment>
<comment type="PTM">
    <text evidence="1">Phosphorylation at Tyr-49 and Tyr-98 both reduce by half the turnover in the reaction with cytochrome c oxidase, down-regulating mitochondrial respiration.</text>
</comment>
<comment type="similarity">
    <text evidence="6">Belongs to the cytochrome c family.</text>
</comment>
<comment type="online information" name="Protein Spotlight">
    <link uri="https://www.proteinspotlight.org/back_issues/076"/>
    <text>Life shuttle - Issue 76 of November 2006</text>
</comment>